<protein>
    <recommendedName>
        <fullName evidence="1">Large ribosomal subunit protein eL32</fullName>
    </recommendedName>
    <alternativeName>
        <fullName>60S ribosomal protein L32</fullName>
    </alternativeName>
    <alternativeName>
        <fullName>Ribosomal protein 49</fullName>
    </alternativeName>
</protein>
<dbReference type="EMBL" id="Y09708">
    <property type="protein sequence ID" value="CAA70879.1"/>
    <property type="molecule type" value="Genomic_DNA"/>
</dbReference>
<dbReference type="EMBL" id="AJ310285">
    <property type="protein sequence ID" value="CAC47966.1"/>
    <property type="molecule type" value="Genomic_DNA"/>
</dbReference>
<dbReference type="EMBL" id="AJ310286">
    <property type="protein sequence ID" value="CAC47967.1"/>
    <property type="molecule type" value="Genomic_DNA"/>
</dbReference>
<dbReference type="EMBL" id="AJ310287">
    <property type="protein sequence ID" value="CAC47968.1"/>
    <property type="molecule type" value="Genomic_DNA"/>
</dbReference>
<dbReference type="EMBL" id="AJ310288">
    <property type="protein sequence ID" value="CAC47969.1"/>
    <property type="molecule type" value="Genomic_DNA"/>
</dbReference>
<dbReference type="EMBL" id="AJ310289">
    <property type="protein sequence ID" value="CAC47970.1"/>
    <property type="molecule type" value="Genomic_DNA"/>
</dbReference>
<dbReference type="EMBL" id="AJ310290">
    <property type="protein sequence ID" value="CAC47971.1"/>
    <property type="molecule type" value="Genomic_DNA"/>
</dbReference>
<dbReference type="EMBL" id="AJ310291">
    <property type="protein sequence ID" value="CAC47972.1"/>
    <property type="molecule type" value="Genomic_DNA"/>
</dbReference>
<dbReference type="EMBL" id="AJ310292">
    <property type="protein sequence ID" value="CAC47973.1"/>
    <property type="molecule type" value="Genomic_DNA"/>
</dbReference>
<dbReference type="EMBL" id="AJ310293">
    <property type="protein sequence ID" value="CAC47974.1"/>
    <property type="molecule type" value="Genomic_DNA"/>
</dbReference>
<dbReference type="EMBL" id="AJ310294">
    <property type="protein sequence ID" value="CAC47975.1"/>
    <property type="molecule type" value="Genomic_DNA"/>
</dbReference>
<dbReference type="EMBL" id="AJ310295">
    <property type="protein sequence ID" value="CAC47976.1"/>
    <property type="molecule type" value="Genomic_DNA"/>
</dbReference>
<dbReference type="EMBL" id="AJ310296">
    <property type="protein sequence ID" value="CAC47977.1"/>
    <property type="molecule type" value="Genomic_DNA"/>
</dbReference>
<dbReference type="EMBL" id="AJ310297">
    <property type="protein sequence ID" value="CAC47978.1"/>
    <property type="molecule type" value="Genomic_DNA"/>
</dbReference>
<dbReference type="EMBL" id="AJ310298">
    <property type="protein sequence ID" value="CAC47979.1"/>
    <property type="molecule type" value="Genomic_DNA"/>
</dbReference>
<dbReference type="EMBL" id="AJ310299">
    <property type="protein sequence ID" value="CAC47980.1"/>
    <property type="molecule type" value="Genomic_DNA"/>
</dbReference>
<dbReference type="EMBL" id="AJ310300">
    <property type="protein sequence ID" value="CAC47981.1"/>
    <property type="molecule type" value="Genomic_DNA"/>
</dbReference>
<dbReference type="EMBL" id="AJ310301">
    <property type="protein sequence ID" value="CAC47982.1"/>
    <property type="molecule type" value="Genomic_DNA"/>
</dbReference>
<dbReference type="EMBL" id="AJ310302">
    <property type="protein sequence ID" value="CAC47983.1"/>
    <property type="molecule type" value="Genomic_DNA"/>
</dbReference>
<dbReference type="EMBL" id="AJ310303">
    <property type="protein sequence ID" value="CAC47984.1"/>
    <property type="molecule type" value="Genomic_DNA"/>
</dbReference>
<dbReference type="EMBL" id="AJ310304">
    <property type="protein sequence ID" value="CAC47985.1"/>
    <property type="molecule type" value="Genomic_DNA"/>
</dbReference>
<dbReference type="EMBL" id="AJ310305">
    <property type="protein sequence ID" value="CAC47986.1"/>
    <property type="molecule type" value="Genomic_DNA"/>
</dbReference>
<dbReference type="EMBL" id="AJ310306">
    <property type="protein sequence ID" value="CAC47987.1"/>
    <property type="molecule type" value="Genomic_DNA"/>
</dbReference>
<dbReference type="SMR" id="P84313"/>
<dbReference type="GO" id="GO:0022625">
    <property type="term" value="C:cytosolic large ribosomal subunit"/>
    <property type="evidence" value="ECO:0007669"/>
    <property type="project" value="TreeGrafter"/>
</dbReference>
<dbReference type="GO" id="GO:0003735">
    <property type="term" value="F:structural constituent of ribosome"/>
    <property type="evidence" value="ECO:0007669"/>
    <property type="project" value="InterPro"/>
</dbReference>
<dbReference type="GO" id="GO:0006412">
    <property type="term" value="P:translation"/>
    <property type="evidence" value="ECO:0007669"/>
    <property type="project" value="InterPro"/>
</dbReference>
<dbReference type="CDD" id="cd00513">
    <property type="entry name" value="Ribosomal_L32_L32e"/>
    <property type="match status" value="1"/>
</dbReference>
<dbReference type="InterPro" id="IPR001515">
    <property type="entry name" value="Ribosomal_eL32"/>
</dbReference>
<dbReference type="InterPro" id="IPR018263">
    <property type="entry name" value="Ribosomal_eL32_CS"/>
</dbReference>
<dbReference type="InterPro" id="IPR036351">
    <property type="entry name" value="Ribosomal_eL32_sf"/>
</dbReference>
<dbReference type="PANTHER" id="PTHR23413">
    <property type="entry name" value="60S RIBOSOMAL PROTEIN L32 AND DNA-DIRECTED RNA POLYMERASE II, SUBUNIT N"/>
    <property type="match status" value="1"/>
</dbReference>
<dbReference type="PANTHER" id="PTHR23413:SF1">
    <property type="entry name" value="RIBOSOMAL PROTEIN L32"/>
    <property type="match status" value="1"/>
</dbReference>
<dbReference type="Pfam" id="PF01655">
    <property type="entry name" value="Ribosomal_L32e"/>
    <property type="match status" value="1"/>
</dbReference>
<dbReference type="SMART" id="SM01393">
    <property type="entry name" value="Ribosomal_L32e"/>
    <property type="match status" value="1"/>
</dbReference>
<dbReference type="SUPFAM" id="SSF52042">
    <property type="entry name" value="Ribosomal protein L32e"/>
    <property type="match status" value="1"/>
</dbReference>
<dbReference type="PROSITE" id="PS00580">
    <property type="entry name" value="RIBOSOMAL_L32E"/>
    <property type="match status" value="1"/>
</dbReference>
<organism>
    <name type="scientific">Drosophila madeirensis</name>
    <name type="common">Fruit fly</name>
    <dbReference type="NCBI Taxonomy" id="30013"/>
    <lineage>
        <taxon>Eukaryota</taxon>
        <taxon>Metazoa</taxon>
        <taxon>Ecdysozoa</taxon>
        <taxon>Arthropoda</taxon>
        <taxon>Hexapoda</taxon>
        <taxon>Insecta</taxon>
        <taxon>Pterygota</taxon>
        <taxon>Neoptera</taxon>
        <taxon>Endopterygota</taxon>
        <taxon>Diptera</taxon>
        <taxon>Brachycera</taxon>
        <taxon>Muscomorpha</taxon>
        <taxon>Ephydroidea</taxon>
        <taxon>Drosophilidae</taxon>
        <taxon>Drosophila</taxon>
        <taxon>Sophophora</taxon>
    </lineage>
</organism>
<reference key="1">
    <citation type="journal article" date="1998" name="Mol. Phylogenet. Evol.">
        <title>Molecular and chromosomal phylogeny in the obscura group of Drosophila inferred from sequences of the rp49 gene region.</title>
        <authorList>
            <person name="Ramos-Onsins S."/>
            <person name="Segarra C."/>
            <person name="Rozas J."/>
            <person name="Aguade M."/>
        </authorList>
    </citation>
    <scope>NUCLEOTIDE SEQUENCE [GENOMIC DNA]</scope>
</reference>
<reference key="2">
    <citation type="submission" date="2001-03" db="EMBL/GenBank/DDBJ databases">
        <title>DNA variation at the rp49 gene region in Drosophila madeirensis and D. subobscura from Madeira: inferences about the origin of an insular endemic species.</title>
        <authorList>
            <person name="Khadem M."/>
            <person name="Rozas J."/>
            <person name="Segarra C."/>
            <person name="Aguade M."/>
        </authorList>
    </citation>
    <scope>NUCLEOTIDE SEQUENCE [GENOMIC DNA]</scope>
    <source>
        <strain>M003</strain>
        <strain>M006</strain>
        <strain>M007</strain>
        <strain>M009</strain>
        <strain>M010</strain>
        <strain>M012</strain>
        <strain>M013</strain>
        <strain>M014</strain>
        <strain>M015</strain>
        <strain>M016</strain>
        <strain>M017</strain>
        <strain>M018</strain>
        <strain>M020</strain>
        <strain>M021</strain>
        <strain>M050. M051</strain>
        <strain>M98/1</strain>
        <strain>MII</strain>
        <strain>MpC</strain>
        <strain>MT</strain>
        <strain>MV</strain>
        <strain>MVIII</strain>
    </source>
</reference>
<keyword id="KW-0687">Ribonucleoprotein</keyword>
<keyword id="KW-0689">Ribosomal protein</keyword>
<sequence>MTIRPAYRPKIIKKRTKHFIRHQSDRYAKLSHKWRKPKGIDNRVRRRFKGQYLMPNIGYGSNKRTRHMLPTGFKKFLVHNVRELEVLLMQNRIYCGEIAHAVSSKKRKEIVERAKQLSIRLTNPNGRLRSQENE</sequence>
<gene>
    <name type="primary">RpL32</name>
    <name type="synonym">rp49</name>
</gene>
<proteinExistence type="inferred from homology"/>
<comment type="similarity">
    <text evidence="1">Belongs to the eukaryotic ribosomal protein eL32 family.</text>
</comment>
<evidence type="ECO:0000305" key="1"/>
<accession>P84313</accession>
<accession>P13930</accession>
<name>RL32_DROMD</name>
<feature type="chain" id="PRO_0000131127" description="Large ribosomal subunit protein eL32">
    <location>
        <begin position="1"/>
        <end position="134"/>
    </location>
</feature>